<comment type="function">
    <text evidence="1">Provides the (R)-glutamate required for cell wall biosynthesis.</text>
</comment>
<comment type="catalytic activity">
    <reaction evidence="1">
        <text>L-glutamate = D-glutamate</text>
        <dbReference type="Rhea" id="RHEA:12813"/>
        <dbReference type="ChEBI" id="CHEBI:29985"/>
        <dbReference type="ChEBI" id="CHEBI:29986"/>
        <dbReference type="EC" id="5.1.1.3"/>
    </reaction>
</comment>
<comment type="pathway">
    <text evidence="1">Cell wall biogenesis; peptidoglycan biosynthesis.</text>
</comment>
<comment type="similarity">
    <text evidence="1">Belongs to the aspartate/glutamate racemases family.</text>
</comment>
<keyword id="KW-0133">Cell shape</keyword>
<keyword id="KW-0961">Cell wall biogenesis/degradation</keyword>
<keyword id="KW-0413">Isomerase</keyword>
<keyword id="KW-0573">Peptidoglycan synthesis</keyword>
<keyword id="KW-1185">Reference proteome</keyword>
<reference key="1">
    <citation type="journal article" date="1998" name="Science">
        <title>Complete genome sequence of Treponema pallidum, the syphilis spirochete.</title>
        <authorList>
            <person name="Fraser C.M."/>
            <person name="Norris S.J."/>
            <person name="Weinstock G.M."/>
            <person name="White O."/>
            <person name="Sutton G.G."/>
            <person name="Dodson R.J."/>
            <person name="Gwinn M.L."/>
            <person name="Hickey E.K."/>
            <person name="Clayton R.A."/>
            <person name="Ketchum K.A."/>
            <person name="Sodergren E."/>
            <person name="Hardham J.M."/>
            <person name="McLeod M.P."/>
            <person name="Salzberg S.L."/>
            <person name="Peterson J.D."/>
            <person name="Khalak H.G."/>
            <person name="Richardson D.L."/>
            <person name="Howell J.K."/>
            <person name="Chidambaram M."/>
            <person name="Utterback T.R."/>
            <person name="McDonald L.A."/>
            <person name="Artiach P."/>
            <person name="Bowman C."/>
            <person name="Cotton M.D."/>
            <person name="Fujii C."/>
            <person name="Garland S.A."/>
            <person name="Hatch B."/>
            <person name="Horst K."/>
            <person name="Roberts K.M."/>
            <person name="Sandusky M."/>
            <person name="Weidman J.F."/>
            <person name="Smith H.O."/>
            <person name="Venter J.C."/>
        </authorList>
    </citation>
    <scope>NUCLEOTIDE SEQUENCE [LARGE SCALE GENOMIC DNA]</scope>
    <source>
        <strain>Nichols</strain>
    </source>
</reference>
<sequence>MSDRREQFQYAFLDSGIGGLPYAHALRVRVPEASLVYVADRVYFPYGNKSSAQIIARASAVLQKVQTNFSPHIVVLACNSMSVNALEFLRAQVSVPVVGVVPAIKQAVACSHKKHIGVLATQCTITHPYTACLRAQFGAGCVFQMRADARLIECLERGLIFEVEDMQREAVARSVMPFQEAGVDVLVLACTHFVHVRHLFQDCVGTSCTVVDSLEGVVRRTLRLCPPQSQLRGNAACYVTGARDAVCAARYARYAQHFGLRWAGFLDV</sequence>
<dbReference type="EC" id="5.1.1.3" evidence="1"/>
<dbReference type="EMBL" id="AE000520">
    <property type="protein sequence ID" value="AAC65392.1"/>
    <property type="molecule type" value="Genomic_DNA"/>
</dbReference>
<dbReference type="PIR" id="E71329">
    <property type="entry name" value="E71329"/>
</dbReference>
<dbReference type="SMR" id="O83421"/>
<dbReference type="STRING" id="243276.TP_0406"/>
<dbReference type="EnsemblBacteria" id="AAC65392">
    <property type="protein sequence ID" value="AAC65392"/>
    <property type="gene ID" value="TP_0406"/>
</dbReference>
<dbReference type="KEGG" id="tpa:TP_0406"/>
<dbReference type="KEGG" id="tpw:TPANIC_0406"/>
<dbReference type="eggNOG" id="COG0796">
    <property type="taxonomic scope" value="Bacteria"/>
</dbReference>
<dbReference type="HOGENOM" id="CLU_052344_2_2_12"/>
<dbReference type="OrthoDB" id="9801055at2"/>
<dbReference type="UniPathway" id="UPA00219"/>
<dbReference type="Proteomes" id="UP000000811">
    <property type="component" value="Chromosome"/>
</dbReference>
<dbReference type="GO" id="GO:0008881">
    <property type="term" value="F:glutamate racemase activity"/>
    <property type="evidence" value="ECO:0007669"/>
    <property type="project" value="UniProtKB-UniRule"/>
</dbReference>
<dbReference type="GO" id="GO:0071555">
    <property type="term" value="P:cell wall organization"/>
    <property type="evidence" value="ECO:0007669"/>
    <property type="project" value="UniProtKB-KW"/>
</dbReference>
<dbReference type="GO" id="GO:0009252">
    <property type="term" value="P:peptidoglycan biosynthetic process"/>
    <property type="evidence" value="ECO:0007669"/>
    <property type="project" value="UniProtKB-UniRule"/>
</dbReference>
<dbReference type="GO" id="GO:0008360">
    <property type="term" value="P:regulation of cell shape"/>
    <property type="evidence" value="ECO:0007669"/>
    <property type="project" value="UniProtKB-KW"/>
</dbReference>
<dbReference type="Gene3D" id="3.40.50.1860">
    <property type="match status" value="2"/>
</dbReference>
<dbReference type="HAMAP" id="MF_00258">
    <property type="entry name" value="Glu_racemase"/>
    <property type="match status" value="1"/>
</dbReference>
<dbReference type="InterPro" id="IPR015942">
    <property type="entry name" value="Asp/Glu/hydantoin_racemase"/>
</dbReference>
<dbReference type="InterPro" id="IPR001920">
    <property type="entry name" value="Asp/Glu_race"/>
</dbReference>
<dbReference type="InterPro" id="IPR018187">
    <property type="entry name" value="Asp/Glu_racemase_AS_1"/>
</dbReference>
<dbReference type="InterPro" id="IPR004391">
    <property type="entry name" value="Glu_race"/>
</dbReference>
<dbReference type="NCBIfam" id="TIGR00067">
    <property type="entry name" value="glut_race"/>
    <property type="match status" value="1"/>
</dbReference>
<dbReference type="PANTHER" id="PTHR21198">
    <property type="entry name" value="GLUTAMATE RACEMASE"/>
    <property type="match status" value="1"/>
</dbReference>
<dbReference type="PANTHER" id="PTHR21198:SF2">
    <property type="entry name" value="GLUTAMATE RACEMASE"/>
    <property type="match status" value="1"/>
</dbReference>
<dbReference type="Pfam" id="PF01177">
    <property type="entry name" value="Asp_Glu_race"/>
    <property type="match status" value="1"/>
</dbReference>
<dbReference type="SUPFAM" id="SSF53681">
    <property type="entry name" value="Aspartate/glutamate racemase"/>
    <property type="match status" value="2"/>
</dbReference>
<dbReference type="PROSITE" id="PS00923">
    <property type="entry name" value="ASP_GLU_RACEMASE_1"/>
    <property type="match status" value="1"/>
</dbReference>
<proteinExistence type="inferred from homology"/>
<evidence type="ECO:0000255" key="1">
    <source>
        <dbReference type="HAMAP-Rule" id="MF_00258"/>
    </source>
</evidence>
<feature type="chain" id="PRO_0000095529" description="Glutamate racemase">
    <location>
        <begin position="1"/>
        <end position="268"/>
    </location>
</feature>
<feature type="active site" description="Proton donor/acceptor" evidence="1">
    <location>
        <position position="78"/>
    </location>
</feature>
<feature type="active site" description="Proton donor/acceptor" evidence="1">
    <location>
        <position position="190"/>
    </location>
</feature>
<feature type="binding site" evidence="1">
    <location>
        <begin position="14"/>
        <end position="15"/>
    </location>
    <ligand>
        <name>substrate</name>
    </ligand>
</feature>
<feature type="binding site" evidence="1">
    <location>
        <begin position="46"/>
        <end position="47"/>
    </location>
    <ligand>
        <name>substrate</name>
    </ligand>
</feature>
<feature type="binding site" evidence="1">
    <location>
        <begin position="79"/>
        <end position="80"/>
    </location>
    <ligand>
        <name>substrate</name>
    </ligand>
</feature>
<feature type="binding site" evidence="1">
    <location>
        <begin position="191"/>
        <end position="192"/>
    </location>
    <ligand>
        <name>substrate</name>
    </ligand>
</feature>
<name>MURI_TREPA</name>
<gene>
    <name evidence="1" type="primary">murI</name>
    <name type="ordered locus">TP_0406</name>
</gene>
<organism>
    <name type="scientific">Treponema pallidum (strain Nichols)</name>
    <dbReference type="NCBI Taxonomy" id="243276"/>
    <lineage>
        <taxon>Bacteria</taxon>
        <taxon>Pseudomonadati</taxon>
        <taxon>Spirochaetota</taxon>
        <taxon>Spirochaetia</taxon>
        <taxon>Spirochaetales</taxon>
        <taxon>Treponemataceae</taxon>
        <taxon>Treponema</taxon>
    </lineage>
</organism>
<protein>
    <recommendedName>
        <fullName evidence="1">Glutamate racemase</fullName>
        <ecNumber evidence="1">5.1.1.3</ecNumber>
    </recommendedName>
</protein>
<accession>O83421</accession>